<name>Y14D_BPLZ3</name>
<organism>
    <name type="scientific">Enterobacteria phage LZ3</name>
    <name type="common">Bacteriophage LZ3</name>
    <dbReference type="NCBI Taxonomy" id="37362"/>
    <lineage>
        <taxon>Viruses</taxon>
        <taxon>Duplodnaviria</taxon>
        <taxon>Heunggongvirae</taxon>
        <taxon>Uroviricota</taxon>
        <taxon>Caudoviricetes</taxon>
        <taxon>Straboviridae</taxon>
        <taxon>Tevenvirinae</taxon>
        <taxon>Tequatrovirus</taxon>
    </lineage>
</organism>
<proteinExistence type="predicted"/>
<gene>
    <name type="primary">frd.2</name>
    <name type="synonym">frd2</name>
</gene>
<accession>Q76VG9</accession>
<feature type="chain" id="PRO_0000165192" description="Uncharacterized 14.8 kDa protein in frd-Gp32 intergenic region">
    <location>
        <begin position="1"/>
        <end position="128"/>
    </location>
</feature>
<protein>
    <recommendedName>
        <fullName>Uncharacterized 14.8 kDa protein in frd-Gp32 intergenic region</fullName>
    </recommendedName>
</protein>
<sequence>MEIGKKYELNPHRIKSFIDISSSNANMVGIIQENGGWFEVKSILSLDGFDYVTEIICANGEIYNDDGMGDDYFELSEEEFYCFREYKEPTSEEDKVEDKVSDVTKIHCIVDENNVDEIIELLRKTFKA</sequence>
<organismHost>
    <name type="scientific">Escherichia coli</name>
    <dbReference type="NCBI Taxonomy" id="562"/>
</organismHost>
<reference key="1">
    <citation type="submission" date="1995-08" db="EMBL/GenBank/DDBJ databases">
        <title>DNA sequences of the frd region in T4-related bacteriophages.</title>
        <authorList>
            <person name="Poglazov A.B."/>
            <person name="Porter D."/>
            <person name="Kutter E.M."/>
            <person name="Mesyanzhinov V.V."/>
        </authorList>
    </citation>
    <scope>NUCLEOTIDE SEQUENCE [GENOMIC DNA]</scope>
</reference>
<dbReference type="EMBL" id="L46835">
    <property type="protein sequence ID" value="AAA74676.1"/>
    <property type="molecule type" value="Genomic_DNA"/>
</dbReference>
<dbReference type="SMR" id="Q76VG9"/>
<dbReference type="InterPro" id="IPR004885">
    <property type="entry name" value="FRD2"/>
</dbReference>
<dbReference type="Pfam" id="PF03197">
    <property type="entry name" value="FRD2"/>
    <property type="match status" value="1"/>
</dbReference>